<protein>
    <recommendedName>
        <fullName>Gene 19 protein</fullName>
    </recommendedName>
    <alternativeName>
        <fullName>Gp19</fullName>
    </alternativeName>
</protein>
<feature type="chain" id="PRO_0000164727" description="Gene 19 protein">
    <location>
        <begin position="1"/>
        <end position="125"/>
    </location>
</feature>
<gene>
    <name type="primary">19</name>
</gene>
<sequence>MAYATAEDVVTLWAKEPEPEVMALIERRLQQIERMIKRRIPDLDVKAAASATFRADLIDIEADAVLRLVRNPEGYLSETDGAYTYQLQADLSQGKLTILDEEWEILGVNSQKRMAVIVPNVVMPT</sequence>
<name>VG19_BPML5</name>
<proteinExistence type="predicted"/>
<dbReference type="EMBL" id="Z18946">
    <property type="protein sequence ID" value="CAA79395.1"/>
    <property type="molecule type" value="Genomic_DNA"/>
</dbReference>
<dbReference type="PIR" id="S30964">
    <property type="entry name" value="S30964"/>
</dbReference>
<dbReference type="RefSeq" id="NP_039683.1">
    <property type="nucleotide sequence ID" value="NC_001335.1"/>
</dbReference>
<dbReference type="SMR" id="Q05225"/>
<dbReference type="GeneID" id="2942926"/>
<dbReference type="KEGG" id="vg:2942926"/>
<dbReference type="OrthoDB" id="14615at10239"/>
<dbReference type="Proteomes" id="UP000002123">
    <property type="component" value="Genome"/>
</dbReference>
<dbReference type="InterPro" id="IPR018963">
    <property type="entry name" value="Mycophage_D29_Gp19"/>
</dbReference>
<dbReference type="Pfam" id="PF09355">
    <property type="entry name" value="Phage_Gp19"/>
    <property type="match status" value="1"/>
</dbReference>
<organism>
    <name type="scientific">Mycobacterium phage L5</name>
    <name type="common">Mycobacteriophage L5</name>
    <dbReference type="NCBI Taxonomy" id="31757"/>
    <lineage>
        <taxon>Viruses</taxon>
        <taxon>Duplodnaviria</taxon>
        <taxon>Heunggongvirae</taxon>
        <taxon>Uroviricota</taxon>
        <taxon>Caudoviricetes</taxon>
        <taxon>Fromanvirus</taxon>
    </lineage>
</organism>
<organismHost>
    <name type="scientific">Mycobacterium</name>
    <dbReference type="NCBI Taxonomy" id="1763"/>
</organismHost>
<keyword id="KW-1185">Reference proteome</keyword>
<accession>Q05225</accession>
<reference key="1">
    <citation type="journal article" date="1993" name="Mol. Microbiol.">
        <title>DNA sequence, structure and gene expression of mycobacteriophage L5: a phage system for mycobacterial genetics.</title>
        <authorList>
            <person name="Hatfull G.F."/>
            <person name="Sarkis G.J."/>
        </authorList>
    </citation>
    <scope>NUCLEOTIDE SEQUENCE [LARGE SCALE GENOMIC DNA]</scope>
</reference>